<organism>
    <name type="scientific">Homo sapiens</name>
    <name type="common">Human</name>
    <dbReference type="NCBI Taxonomy" id="9606"/>
    <lineage>
        <taxon>Eukaryota</taxon>
        <taxon>Metazoa</taxon>
        <taxon>Chordata</taxon>
        <taxon>Craniata</taxon>
        <taxon>Vertebrata</taxon>
        <taxon>Euteleostomi</taxon>
        <taxon>Mammalia</taxon>
        <taxon>Eutheria</taxon>
        <taxon>Euarchontoglires</taxon>
        <taxon>Primates</taxon>
        <taxon>Haplorrhini</taxon>
        <taxon>Catarrhini</taxon>
        <taxon>Hominidae</taxon>
        <taxon>Homo</taxon>
    </lineage>
</organism>
<comment type="function">
    <text evidence="4 5 6">Small GTP-binding protein which cycles between a GDP-bound inactive and a GTP-bound active form. Involved in EGFR and CHRM3 signaling pathways through stimulation of PLCE1. May play a role in cytoskeletal rearrangements and regulate cell spreading through activation of the effector TNIK. May regulate membrane vesiculation in red blood cells.</text>
</comment>
<comment type="catalytic activity">
    <reaction evidence="2">
        <text>GTP + H2O = GDP + phosphate + H(+)</text>
        <dbReference type="Rhea" id="RHEA:19669"/>
        <dbReference type="ChEBI" id="CHEBI:15377"/>
        <dbReference type="ChEBI" id="CHEBI:15378"/>
        <dbReference type="ChEBI" id="CHEBI:37565"/>
        <dbReference type="ChEBI" id="CHEBI:43474"/>
        <dbReference type="ChEBI" id="CHEBI:58189"/>
        <dbReference type="EC" id="3.6.5.2"/>
    </reaction>
</comment>
<comment type="subunit">
    <text evidence="1">Interacts with PLCE1. Interacts with SGSM1, SGSM2 and SGSM3. The GTP-bound form of RAP2B interacts with RUNDC3A (By similarity).</text>
</comment>
<comment type="interaction">
    <interactant intactId="EBI-750871">
        <id>P61225</id>
    </interactant>
    <interactant intactId="EBI-1058722">
        <id>Q13554</id>
        <label>CAMK2B</label>
    </interactant>
    <organismsDiffer>false</organismsDiffer>
    <experiments>3</experiments>
</comment>
<comment type="interaction">
    <interactant intactId="EBI-750871">
        <id>P61225</id>
    </interactant>
    <interactant intactId="EBI-11523526">
        <id>Q13554-3</id>
        <label>CAMK2B</label>
    </interactant>
    <organismsDiffer>false</organismsDiffer>
    <experiments>3</experiments>
</comment>
<comment type="interaction">
    <interactant intactId="EBI-750871">
        <id>P61225</id>
    </interactant>
    <interactant intactId="EBI-12832744">
        <id>P52306-5</id>
        <label>RAP1GDS1</label>
    </interactant>
    <organismsDiffer>false</organismsDiffer>
    <experiments>3</experiments>
</comment>
<comment type="interaction">
    <interactant intactId="EBI-750871">
        <id>P61225</id>
    </interactant>
    <interactant intactId="EBI-367390">
        <id>Q8WWW0</id>
        <label>RASSF5</label>
    </interactant>
    <organismsDiffer>false</organismsDiffer>
    <experiments>3</experiments>
</comment>
<comment type="interaction">
    <interactant intactId="EBI-750871">
        <id>P61225</id>
    </interactant>
    <interactant intactId="EBI-747225">
        <id>Q59EK9</id>
        <label>RUNDC3A</label>
    </interactant>
    <organismsDiffer>false</organismsDiffer>
    <experiments>4</experiments>
</comment>
<comment type="interaction">
    <interactant intactId="EBI-750871">
        <id>P61225</id>
    </interactant>
    <interactant intactId="EBI-11957366">
        <id>Q59EK9-3</id>
        <label>RUNDC3A</label>
    </interactant>
    <organismsDiffer>false</organismsDiffer>
    <experiments>3</experiments>
</comment>
<comment type="subcellular location">
    <subcellularLocation>
        <location evidence="6">Recycling endosome membrane</location>
        <topology evidence="6">Lipid-anchor</topology>
        <orientation evidence="6">Cytoplasmic side</orientation>
    </subcellularLocation>
    <text>Associated with red blood cells-released vesicles.</text>
</comment>
<comment type="tissue specificity">
    <text evidence="6">Expressed in red blood cells (at protein level).</text>
</comment>
<comment type="domain">
    <text evidence="1">The effector domain mediates the interaction with RUNDC3A.</text>
</comment>
<comment type="PTM">
    <text evidence="3">Palmitoylated. Unlike RAP2A and RAP2C, palmitoylation of RAP2B is not required for association with recycling endosome membranes and activation of TNIK.</text>
</comment>
<comment type="similarity">
    <text evidence="8">Belongs to the small GTPase superfamily. Ras family.</text>
</comment>
<comment type="online information" name="Atlas of Genetics and Cytogenetics in Oncology and Haematology">
    <link uri="https://atlasgeneticsoncology.org/gene/275/RAP2B"/>
</comment>
<reference key="1">
    <citation type="journal article" date="1990" name="Nucleic Acids Res.">
        <title>cDNA sequence of a new ras-related gene (rap2b) isolated from human platelets with sequence homology to rap2.</title>
        <authorList>
            <person name="Farrell F.X."/>
            <person name="Ohmstede C.A."/>
            <person name="Reep B.R."/>
            <person name="Lapetina E.G."/>
        </authorList>
    </citation>
    <scope>NUCLEOTIDE SEQUENCE [MRNA]</scope>
    <source>
        <tissue>Platelet</tissue>
    </source>
</reference>
<reference key="2">
    <citation type="journal article" date="1990" name="Proc. Natl. Acad. Sci. U.S.A.">
        <title>RAP2B: a RAS-related GTP-binding protein from platelets.</title>
        <authorList>
            <person name="Ohmstede C.A."/>
            <person name="Farrell F.X."/>
            <person name="Reep B.R."/>
            <person name="Clemetson K.J."/>
            <person name="Lapetina E.G."/>
        </authorList>
    </citation>
    <scope>NUCLEOTIDE SEQUENCE [MRNA]</scope>
    <source>
        <tissue>Platelet</tissue>
    </source>
</reference>
<reference key="3">
    <citation type="submission" date="2002-03" db="EMBL/GenBank/DDBJ databases">
        <title>cDNA clones of human proteins involved in signal transduction sequenced by the Guthrie cDNA resource center (www.cdna.org).</title>
        <authorList>
            <person name="Puhl H.L. III"/>
            <person name="Ikeda S.R."/>
            <person name="Aronstam R.S."/>
        </authorList>
    </citation>
    <scope>NUCLEOTIDE SEQUENCE [LARGE SCALE MRNA]</scope>
    <source>
        <tissue>Brain</tissue>
    </source>
</reference>
<reference key="4">
    <citation type="journal article" date="2004" name="Genome Res.">
        <title>The status, quality, and expansion of the NIH full-length cDNA project: the Mammalian Gene Collection (MGC).</title>
        <authorList>
            <consortium name="The MGC Project Team"/>
        </authorList>
    </citation>
    <scope>NUCLEOTIDE SEQUENCE [LARGE SCALE MRNA]</scope>
    <source>
        <tissue>Placenta</tissue>
    </source>
</reference>
<reference key="5">
    <citation type="journal article" date="1993" name="Biochem. J.">
        <title>Prenyl group identification of rap2 proteins: a ras superfamily member other than ras that is farnesylated.</title>
        <authorList>
            <person name="Farrell F.X."/>
            <person name="Yamamoto K."/>
            <person name="Lapetina E.G."/>
        </authorList>
    </citation>
    <scope>ISOPRENYLATION AT CYS-180</scope>
    <scope>METHYLATION AT CYS-180</scope>
</reference>
<reference key="6">
    <citation type="journal article" date="2002" name="J. Biol. Chem.">
        <title>Stimulation of phospholipase C-epsilon by the M3 muscarinic acetylcholine receptor mediated by cyclic AMP and the GTPase Rap2B.</title>
        <authorList>
            <person name="Evellin S."/>
            <person name="Nolte J."/>
            <person name="Tysack K."/>
            <person name="vom Dorp F."/>
            <person name="Thiel M."/>
            <person name="Weernink P.A.O."/>
            <person name="Jakobs K.H."/>
            <person name="Webb E.J."/>
            <person name="Lomasney J.W."/>
            <person name="Schmidt M."/>
        </authorList>
    </citation>
    <scope>FUNCTION</scope>
</reference>
<reference key="7">
    <citation type="journal article" date="2002" name="Oncogene">
        <title>Differential roles of Ras and Rap1 in growth factor-dependent activation of phospholipase C epsilon.</title>
        <authorList>
            <person name="Song C."/>
            <person name="Satoh T."/>
            <person name="Edamatsu H."/>
            <person name="Wu D."/>
            <person name="Tadano M."/>
            <person name="Gao X."/>
            <person name="Kataoka T."/>
        </authorList>
    </citation>
    <scope>INTERACTION WITH PLCE1</scope>
</reference>
<reference key="8">
    <citation type="journal article" date="2004" name="Mol. Cell. Biol.">
        <title>Rap2B-dependent stimulation of phospholipase C-epsilon by epidermal growth factor receptor mediated by c-Src phosphorylation of RasGRP3.</title>
        <authorList>
            <person name="Stope M.B."/>
            <person name="Vom Dorp F."/>
            <person name="Szatkowski D."/>
            <person name="Boehm A."/>
            <person name="Keiper M."/>
            <person name="Nolte J."/>
            <person name="Oude Weernink P.A."/>
            <person name="Rosskopf D."/>
            <person name="Evellin S."/>
            <person name="Jakobs K.H."/>
            <person name="Schmidt M."/>
        </authorList>
    </citation>
    <scope>FUNCTION</scope>
</reference>
<reference key="9">
    <citation type="journal article" date="2006" name="Biochim. Biophys. Acta">
        <title>Rap2, but not Rap1 GTPase is expressed in human red blood cells and is involved in vesiculation.</title>
        <authorList>
            <person name="Greco F."/>
            <person name="Ciana A."/>
            <person name="Pietra D."/>
            <person name="Balduini C."/>
            <person name="Minetti G."/>
            <person name="Torti M."/>
        </authorList>
    </citation>
    <scope>FUNCTION</scope>
    <scope>SUBCELLULAR LOCATION</scope>
    <scope>TISSUE SPECIFICITY</scope>
</reference>
<reference key="10">
    <citation type="journal article" date="2007" name="Genomics">
        <title>Identification of three novel proteins (SGSM1, 2, 3) which modulate small G protein (RAP and RAB)-mediated signaling pathway.</title>
        <authorList>
            <person name="Yang H."/>
            <person name="Sasaki T."/>
            <person name="Minoshima S."/>
            <person name="Shimizu N."/>
        </authorList>
    </citation>
    <scope>INTERACTION WITH SGSM1; SGSM2 AND SGSM3</scope>
</reference>
<reference key="11">
    <citation type="journal article" date="2011" name="BMC Syst. Biol.">
        <title>Initial characterization of the human central proteome.</title>
        <authorList>
            <person name="Burkard T.R."/>
            <person name="Planyavsky M."/>
            <person name="Kaupe I."/>
            <person name="Breitwieser F.P."/>
            <person name="Buerckstuemmer T."/>
            <person name="Bennett K.L."/>
            <person name="Superti-Furga G."/>
            <person name="Colinge J."/>
        </authorList>
    </citation>
    <scope>IDENTIFICATION BY MASS SPECTROMETRY [LARGE SCALE ANALYSIS]</scope>
</reference>
<reference key="12">
    <citation type="journal article" date="2015" name="Proteomics">
        <title>N-terminome analysis of the human mitochondrial proteome.</title>
        <authorList>
            <person name="Vaca Jacome A.S."/>
            <person name="Rabilloud T."/>
            <person name="Schaeffer-Reiss C."/>
            <person name="Rompais M."/>
            <person name="Ayoub D."/>
            <person name="Lane L."/>
            <person name="Bairoch A."/>
            <person name="Van Dorsselaer A."/>
            <person name="Carapito C."/>
        </authorList>
    </citation>
    <scope>IDENTIFICATION BY MASS SPECTROMETRY [LARGE SCALE ANALYSIS]</scope>
</reference>
<evidence type="ECO:0000250" key="1"/>
<evidence type="ECO:0000250" key="2">
    <source>
        <dbReference type="UniProtKB" id="P10114"/>
    </source>
</evidence>
<evidence type="ECO:0000250" key="3">
    <source>
        <dbReference type="UniProtKB" id="P61226"/>
    </source>
</evidence>
<evidence type="ECO:0000269" key="4">
    <source>
    </source>
</evidence>
<evidence type="ECO:0000269" key="5">
    <source>
    </source>
</evidence>
<evidence type="ECO:0000269" key="6">
    <source>
    </source>
</evidence>
<evidence type="ECO:0000269" key="7">
    <source>
    </source>
</evidence>
<evidence type="ECO:0000305" key="8"/>
<evidence type="ECO:0000305" key="9">
    <source>
    </source>
</evidence>
<feature type="chain" id="PRO_0000030215" description="Ras-related protein Rap-2b">
    <location>
        <begin position="1"/>
        <end position="180"/>
    </location>
</feature>
<feature type="propeptide" id="PRO_0000030216" description="Removed in mature form" evidence="9">
    <location>
        <begin position="181"/>
        <end position="183"/>
    </location>
</feature>
<feature type="short sequence motif" description="Effector region" evidence="8">
    <location>
        <begin position="32"/>
        <end position="40"/>
    </location>
</feature>
<feature type="binding site" evidence="1">
    <location>
        <begin position="10"/>
        <end position="17"/>
    </location>
    <ligand>
        <name>GTP</name>
        <dbReference type="ChEBI" id="CHEBI:37565"/>
    </ligand>
</feature>
<feature type="binding site" evidence="1">
    <location>
        <begin position="57"/>
        <end position="61"/>
    </location>
    <ligand>
        <name>GTP</name>
        <dbReference type="ChEBI" id="CHEBI:37565"/>
    </ligand>
</feature>
<feature type="binding site" evidence="1">
    <location>
        <begin position="116"/>
        <end position="119"/>
    </location>
    <ligand>
        <name>GTP</name>
        <dbReference type="ChEBI" id="CHEBI:37565"/>
    </ligand>
</feature>
<feature type="modified residue" description="Cysteine methyl ester" evidence="9">
    <location>
        <position position="180"/>
    </location>
</feature>
<feature type="lipid moiety-binding region" description="S-palmitoyl cysteine" evidence="3">
    <location>
        <position position="176"/>
    </location>
</feature>
<feature type="lipid moiety-binding region" description="S-palmitoyl cysteine" evidence="3">
    <location>
        <position position="177"/>
    </location>
</feature>
<feature type="lipid moiety-binding region" description="S-geranylgeranyl cysteine" evidence="7">
    <location>
        <position position="180"/>
    </location>
</feature>
<feature type="sequence conflict" description="In Ref. 1; CAA37178 and 2; no nucleotide entry." evidence="8" ref="1 2">
    <original>P</original>
    <variation>S</variation>
    <location>
        <position position="170"/>
    </location>
</feature>
<dbReference type="EC" id="3.6.5.2" evidence="2"/>
<dbReference type="EMBL" id="X52987">
    <property type="protein sequence ID" value="CAA37178.1"/>
    <property type="molecule type" value="mRNA"/>
</dbReference>
<dbReference type="EMBL" id="AF493915">
    <property type="protein sequence ID" value="AAM12629.1"/>
    <property type="molecule type" value="mRNA"/>
</dbReference>
<dbReference type="EMBL" id="BC012362">
    <property type="protein sequence ID" value="AAH12362.1"/>
    <property type="molecule type" value="mRNA"/>
</dbReference>
<dbReference type="CCDS" id="CCDS3170.1"/>
<dbReference type="PIR" id="A33121">
    <property type="entry name" value="TVHUR2"/>
</dbReference>
<dbReference type="RefSeq" id="NP_002877.2">
    <property type="nucleotide sequence ID" value="NM_002886.3"/>
</dbReference>
<dbReference type="PDB" id="1N4P">
    <property type="method" value="X-ray"/>
    <property type="resolution" value="2.65 A"/>
    <property type="chains" value="M/N=180-183"/>
</dbReference>
<dbReference type="PDB" id="1N4Q">
    <property type="method" value="X-ray"/>
    <property type="resolution" value="2.40 A"/>
    <property type="chains" value="M/N/O/P/Q/R=180-183"/>
</dbReference>
<dbReference type="PDB" id="1N4R">
    <property type="method" value="X-ray"/>
    <property type="resolution" value="2.80 A"/>
    <property type="chains" value="M/N/O/P/Q/R=180-183"/>
</dbReference>
<dbReference type="PDBsum" id="1N4P"/>
<dbReference type="PDBsum" id="1N4Q"/>
<dbReference type="PDBsum" id="1N4R"/>
<dbReference type="SMR" id="P61225"/>
<dbReference type="BioGRID" id="111847">
    <property type="interactions" value="37"/>
</dbReference>
<dbReference type="FunCoup" id="P61225">
    <property type="interactions" value="811"/>
</dbReference>
<dbReference type="IntAct" id="P61225">
    <property type="interactions" value="16"/>
</dbReference>
<dbReference type="STRING" id="9606.ENSP00000319096"/>
<dbReference type="GlyGen" id="P61225">
    <property type="glycosylation" value="1 site, 1 O-linked glycan (1 site)"/>
</dbReference>
<dbReference type="iPTMnet" id="P61225"/>
<dbReference type="MetOSite" id="P61225"/>
<dbReference type="PhosphoSitePlus" id="P61225"/>
<dbReference type="SwissPalm" id="P61225"/>
<dbReference type="BioMuta" id="RAP2B"/>
<dbReference type="DMDM" id="47117762"/>
<dbReference type="jPOST" id="P61225"/>
<dbReference type="MassIVE" id="P61225"/>
<dbReference type="PaxDb" id="9606-ENSP00000319096"/>
<dbReference type="PeptideAtlas" id="P61225"/>
<dbReference type="ProteomicsDB" id="57278"/>
<dbReference type="Pumba" id="P61225"/>
<dbReference type="Antibodypedia" id="33622">
    <property type="antibodies" value="268 antibodies from 28 providers"/>
</dbReference>
<dbReference type="DNASU" id="5912"/>
<dbReference type="Ensembl" id="ENST00000323534.5">
    <property type="protein sequence ID" value="ENSP00000319096.2"/>
    <property type="gene ID" value="ENSG00000181467.5"/>
</dbReference>
<dbReference type="GeneID" id="5912"/>
<dbReference type="KEGG" id="hsa:5912"/>
<dbReference type="MANE-Select" id="ENST00000323534.5">
    <property type="protein sequence ID" value="ENSP00000319096.2"/>
    <property type="RefSeq nucleotide sequence ID" value="NM_002886.4"/>
    <property type="RefSeq protein sequence ID" value="NP_002877.2"/>
</dbReference>
<dbReference type="UCSC" id="uc003ezr.5">
    <property type="organism name" value="human"/>
</dbReference>
<dbReference type="AGR" id="HGNC:9862"/>
<dbReference type="CTD" id="5912"/>
<dbReference type="DisGeNET" id="5912"/>
<dbReference type="GeneCards" id="RAP2B"/>
<dbReference type="HGNC" id="HGNC:9862">
    <property type="gene designation" value="RAP2B"/>
</dbReference>
<dbReference type="HPA" id="ENSG00000181467">
    <property type="expression patterns" value="Low tissue specificity"/>
</dbReference>
<dbReference type="MIM" id="179541">
    <property type="type" value="gene"/>
</dbReference>
<dbReference type="neXtProt" id="NX_P61225"/>
<dbReference type="OpenTargets" id="ENSG00000181467"/>
<dbReference type="PharmGKB" id="PA34223"/>
<dbReference type="VEuPathDB" id="HostDB:ENSG00000181467"/>
<dbReference type="eggNOG" id="KOG0395">
    <property type="taxonomic scope" value="Eukaryota"/>
</dbReference>
<dbReference type="GeneTree" id="ENSGT00940000160283"/>
<dbReference type="HOGENOM" id="CLU_041217_9_8_1"/>
<dbReference type="InParanoid" id="P61225"/>
<dbReference type="OMA" id="QMNYSAV"/>
<dbReference type="OrthoDB" id="5976022at2759"/>
<dbReference type="PAN-GO" id="P61225">
    <property type="GO annotations" value="6 GO annotations based on evolutionary models"/>
</dbReference>
<dbReference type="PhylomeDB" id="P61225"/>
<dbReference type="TreeFam" id="TF313014"/>
<dbReference type="PathwayCommons" id="P61225"/>
<dbReference type="Reactome" id="R-HSA-6798695">
    <property type="pathway name" value="Neutrophil degranulation"/>
</dbReference>
<dbReference type="SignaLink" id="P61225"/>
<dbReference type="BioGRID-ORCS" id="5912">
    <property type="hits" value="23 hits in 1157 CRISPR screens"/>
</dbReference>
<dbReference type="ChiTaRS" id="RAP2B">
    <property type="organism name" value="human"/>
</dbReference>
<dbReference type="GeneWiki" id="RAP2B"/>
<dbReference type="GenomeRNAi" id="5912"/>
<dbReference type="Pharos" id="P61225">
    <property type="development level" value="Tbio"/>
</dbReference>
<dbReference type="PRO" id="PR:P61225"/>
<dbReference type="Proteomes" id="UP000005640">
    <property type="component" value="Chromosome 3"/>
</dbReference>
<dbReference type="RNAct" id="P61225">
    <property type="molecule type" value="protein"/>
</dbReference>
<dbReference type="Bgee" id="ENSG00000181467">
    <property type="expression patterns" value="Expressed in esophagus squamous epithelium and 202 other cell types or tissues"/>
</dbReference>
<dbReference type="GO" id="GO:0005923">
    <property type="term" value="C:bicellular tight junction"/>
    <property type="evidence" value="ECO:0000314"/>
    <property type="project" value="UniProtKB"/>
</dbReference>
<dbReference type="GO" id="GO:0044291">
    <property type="term" value="C:cell-cell contact zone"/>
    <property type="evidence" value="ECO:0000314"/>
    <property type="project" value="UniProtKB"/>
</dbReference>
<dbReference type="GO" id="GO:0005829">
    <property type="term" value="C:cytosol"/>
    <property type="evidence" value="ECO:0000314"/>
    <property type="project" value="UniProtKB"/>
</dbReference>
<dbReference type="GO" id="GO:0070062">
    <property type="term" value="C:extracellular exosome"/>
    <property type="evidence" value="ECO:0000314"/>
    <property type="project" value="UniProtKB"/>
</dbReference>
<dbReference type="GO" id="GO:0016020">
    <property type="term" value="C:membrane"/>
    <property type="evidence" value="ECO:0000315"/>
    <property type="project" value="UniProtKB"/>
</dbReference>
<dbReference type="GO" id="GO:0045121">
    <property type="term" value="C:membrane raft"/>
    <property type="evidence" value="ECO:0000315"/>
    <property type="project" value="UniProtKB"/>
</dbReference>
<dbReference type="GO" id="GO:0005886">
    <property type="term" value="C:plasma membrane"/>
    <property type="evidence" value="ECO:0000314"/>
    <property type="project" value="UniProtKB"/>
</dbReference>
<dbReference type="GO" id="GO:0055038">
    <property type="term" value="C:recycling endosome membrane"/>
    <property type="evidence" value="ECO:0000250"/>
    <property type="project" value="UniProtKB"/>
</dbReference>
<dbReference type="GO" id="GO:0035579">
    <property type="term" value="C:specific granule membrane"/>
    <property type="evidence" value="ECO:0000304"/>
    <property type="project" value="Reactome"/>
</dbReference>
<dbReference type="GO" id="GO:0070821">
    <property type="term" value="C:tertiary granule membrane"/>
    <property type="evidence" value="ECO:0000304"/>
    <property type="project" value="Reactome"/>
</dbReference>
<dbReference type="GO" id="GO:0003925">
    <property type="term" value="F:G protein activity"/>
    <property type="evidence" value="ECO:0007669"/>
    <property type="project" value="UniProtKB-EC"/>
</dbReference>
<dbReference type="GO" id="GO:0019003">
    <property type="term" value="F:GDP binding"/>
    <property type="evidence" value="ECO:0000314"/>
    <property type="project" value="UniProtKB"/>
</dbReference>
<dbReference type="GO" id="GO:0005525">
    <property type="term" value="F:GTP binding"/>
    <property type="evidence" value="ECO:0000314"/>
    <property type="project" value="UniProtKB"/>
</dbReference>
<dbReference type="GO" id="GO:0003924">
    <property type="term" value="F:GTPase activity"/>
    <property type="evidence" value="ECO:0000318"/>
    <property type="project" value="GO_Central"/>
</dbReference>
<dbReference type="GO" id="GO:0019904">
    <property type="term" value="F:protein domain specific binding"/>
    <property type="evidence" value="ECO:0007669"/>
    <property type="project" value="Ensembl"/>
</dbReference>
<dbReference type="GO" id="GO:0030336">
    <property type="term" value="P:negative regulation of cell migration"/>
    <property type="evidence" value="ECO:0000318"/>
    <property type="project" value="GO_Central"/>
</dbReference>
<dbReference type="GO" id="GO:0030168">
    <property type="term" value="P:platelet activation"/>
    <property type="evidence" value="ECO:0000314"/>
    <property type="project" value="UniProtKB"/>
</dbReference>
<dbReference type="GO" id="GO:0070527">
    <property type="term" value="P:platelet aggregation"/>
    <property type="evidence" value="ECO:0000314"/>
    <property type="project" value="UniProtKB"/>
</dbReference>
<dbReference type="GO" id="GO:0032486">
    <property type="term" value="P:Rap protein signal transduction"/>
    <property type="evidence" value="ECO:0000250"/>
    <property type="project" value="UniProtKB"/>
</dbReference>
<dbReference type="GO" id="GO:0061097">
    <property type="term" value="P:regulation of protein tyrosine kinase activity"/>
    <property type="evidence" value="ECO:0000250"/>
    <property type="project" value="UniProtKB"/>
</dbReference>
<dbReference type="GO" id="GO:0007165">
    <property type="term" value="P:signal transduction"/>
    <property type="evidence" value="ECO:0000304"/>
    <property type="project" value="ProtInc"/>
</dbReference>
<dbReference type="CDD" id="cd04176">
    <property type="entry name" value="Rap2"/>
    <property type="match status" value="1"/>
</dbReference>
<dbReference type="FunFam" id="3.40.50.300:FF:001686">
    <property type="entry name" value="KRAS proto-oncogene, GTPase"/>
    <property type="match status" value="1"/>
</dbReference>
<dbReference type="FunFam" id="3.40.50.300:FF:002735">
    <property type="entry name" value="ras-related protein Rap-2b isoform X3"/>
    <property type="match status" value="1"/>
</dbReference>
<dbReference type="Gene3D" id="3.40.50.300">
    <property type="entry name" value="P-loop containing nucleotide triphosphate hydrolases"/>
    <property type="match status" value="1"/>
</dbReference>
<dbReference type="InterPro" id="IPR027417">
    <property type="entry name" value="P-loop_NTPase"/>
</dbReference>
<dbReference type="InterPro" id="IPR041840">
    <property type="entry name" value="Rap2"/>
</dbReference>
<dbReference type="InterPro" id="IPR005225">
    <property type="entry name" value="Small_GTP-bd"/>
</dbReference>
<dbReference type="InterPro" id="IPR001806">
    <property type="entry name" value="Small_GTPase"/>
</dbReference>
<dbReference type="InterPro" id="IPR020849">
    <property type="entry name" value="Small_GTPase_Ras-type"/>
</dbReference>
<dbReference type="NCBIfam" id="TIGR00231">
    <property type="entry name" value="small_GTP"/>
    <property type="match status" value="1"/>
</dbReference>
<dbReference type="PANTHER" id="PTHR24070">
    <property type="entry name" value="RAS, DI-RAS, AND RHEB FAMILY MEMBERS OF SMALL GTPASE SUPERFAMILY"/>
    <property type="match status" value="1"/>
</dbReference>
<dbReference type="Pfam" id="PF00071">
    <property type="entry name" value="Ras"/>
    <property type="match status" value="1"/>
</dbReference>
<dbReference type="PRINTS" id="PR00449">
    <property type="entry name" value="RASTRNSFRMNG"/>
</dbReference>
<dbReference type="SMART" id="SM00175">
    <property type="entry name" value="RAB"/>
    <property type="match status" value="1"/>
</dbReference>
<dbReference type="SMART" id="SM00173">
    <property type="entry name" value="RAS"/>
    <property type="match status" value="1"/>
</dbReference>
<dbReference type="SMART" id="SM00174">
    <property type="entry name" value="RHO"/>
    <property type="match status" value="1"/>
</dbReference>
<dbReference type="SUPFAM" id="SSF52540">
    <property type="entry name" value="P-loop containing nucleoside triphosphate hydrolases"/>
    <property type="match status" value="1"/>
</dbReference>
<dbReference type="PROSITE" id="PS51421">
    <property type="entry name" value="RAS"/>
    <property type="match status" value="1"/>
</dbReference>
<sequence>MREYKVVVLGSGGVGKSALTVQFVTGSFIEKYDPTIEDFYRKEIEVDSSPSVLEILDTAGTEQFASMRDLYIKNGQGFILVYSLVNQQSFQDIKPMRDQIIRVKRYERVPMILVGNKVDLEGEREVSYGEGKALAEEWSCPFMETSAKNKASVDELFAEIVRQMNYAAQPNGDEGCCSACVIL</sequence>
<keyword id="KW-0002">3D-structure</keyword>
<keyword id="KW-0967">Endosome</keyword>
<keyword id="KW-0342">GTP-binding</keyword>
<keyword id="KW-0378">Hydrolase</keyword>
<keyword id="KW-0449">Lipoprotein</keyword>
<keyword id="KW-0472">Membrane</keyword>
<keyword id="KW-0488">Methylation</keyword>
<keyword id="KW-0547">Nucleotide-binding</keyword>
<keyword id="KW-0564">Palmitate</keyword>
<keyword id="KW-0636">Prenylation</keyword>
<keyword id="KW-1267">Proteomics identification</keyword>
<keyword id="KW-1185">Reference proteome</keyword>
<proteinExistence type="evidence at protein level"/>
<accession>P61225</accession>
<accession>P17964</accession>
<accession>Q96EG5</accession>
<accession>Q9CXG0</accession>
<protein>
    <recommendedName>
        <fullName>Ras-related protein Rap-2b</fullName>
        <ecNumber evidence="2">3.6.5.2</ecNumber>
    </recommendedName>
</protein>
<name>RAP2B_HUMAN</name>
<gene>
    <name type="primary">RAP2B</name>
</gene>